<reference key="1">
    <citation type="journal article" date="1994" name="Biochem. J.">
        <title>The gene family of EF-hand calcium-binding proteins from the flagellum of Trypanosoma brucei.</title>
        <authorList>
            <person name="Wu Y."/>
            <person name="Deford J."/>
            <person name="Benjamin R."/>
            <person name="Lee M.G.-S."/>
            <person name="Ruben L."/>
        </authorList>
    </citation>
    <scope>NUCLEOTIDE SEQUENCE [GENOMIC DNA]</scope>
    <source>
        <strain>427</strain>
    </source>
</reference>
<evidence type="ECO:0000255" key="1">
    <source>
        <dbReference type="PROSITE-ProRule" id="PRU00448"/>
    </source>
</evidence>
<evidence type="ECO:0000256" key="2">
    <source>
        <dbReference type="SAM" id="MobiDB-lite"/>
    </source>
</evidence>
<evidence type="ECO:0000305" key="3"/>
<comment type="function">
    <text>May contribute to the rapid motility of the trypanosomes, playing a role either in flagellar structure or in calcium metabolism. Could alternate between a GDP-bound inactive form to a calcium/GTP-bound active form.</text>
</comment>
<comment type="subcellular location">
    <subcellularLocation>
        <location>Cell projection</location>
        <location>Cilium</location>
        <location>Flagellum</location>
    </subcellularLocation>
</comment>
<comment type="domain">
    <text>This protein has four EF-hand domains, three of which may be functional calcium-binding sites.</text>
</comment>
<comment type="similarity">
    <text evidence="3">Belongs to the calflagin family.</text>
</comment>
<protein>
    <recommendedName>
        <fullName>Flagellar calcium-binding protein TB-1.7G</fullName>
    </recommendedName>
    <alternativeName>
        <fullName>17 kDa calcimedin</fullName>
    </alternativeName>
    <alternativeName>
        <fullName>17 kDa calflagin</fullName>
    </alternativeName>
</protein>
<accession>Q26677</accession>
<keyword id="KW-0106">Calcium</keyword>
<keyword id="KW-0966">Cell projection</keyword>
<keyword id="KW-0969">Cilium</keyword>
<keyword id="KW-0282">Flagellum</keyword>
<keyword id="KW-0479">Metal-binding</keyword>
<keyword id="KW-0677">Repeat</keyword>
<organism>
    <name type="scientific">Trypanosoma brucei brucei</name>
    <dbReference type="NCBI Taxonomy" id="5702"/>
    <lineage>
        <taxon>Eukaryota</taxon>
        <taxon>Discoba</taxon>
        <taxon>Euglenozoa</taxon>
        <taxon>Kinetoplastea</taxon>
        <taxon>Metakinetoplastina</taxon>
        <taxon>Trypanosomatida</taxon>
        <taxon>Trypanosomatidae</taxon>
        <taxon>Trypanosoma</taxon>
    </lineage>
</organism>
<name>FCA4_TRYBB</name>
<sequence>GSKNASNPKDGAASKGGKDGKTTADRKVAWERIRCAIPRDKDAESKSRRIELFKQFDTNGTGKLGFREVLDGCYGILKLDEFTTHLPDIVQRAFDKAKDLGNKVKGVGEEDLVEFLEFRLMLCYIYDIFELTVMFDTMDKDGSLLLELQEFKEALPKLKEWGVDITDATTVFNEIDTNGSGVVTFDEFSCWAVTKKLQVCGDPDDEENGANEGDGANAGDGVPAAEGSA</sequence>
<dbReference type="EMBL" id="U05882">
    <property type="protein sequence ID" value="AAA75582.1"/>
    <property type="molecule type" value="Genomic_DNA"/>
</dbReference>
<dbReference type="PIR" id="S53355">
    <property type="entry name" value="S53355"/>
</dbReference>
<dbReference type="BMRB" id="Q26677"/>
<dbReference type="SMR" id="Q26677"/>
<dbReference type="GO" id="GO:0005929">
    <property type="term" value="C:cilium"/>
    <property type="evidence" value="ECO:0000314"/>
    <property type="project" value="GeneDB"/>
</dbReference>
<dbReference type="GO" id="GO:0005737">
    <property type="term" value="C:cytoplasm"/>
    <property type="evidence" value="ECO:0000314"/>
    <property type="project" value="GeneDB"/>
</dbReference>
<dbReference type="GO" id="GO:0031514">
    <property type="term" value="C:motile cilium"/>
    <property type="evidence" value="ECO:0007669"/>
    <property type="project" value="UniProtKB-SubCell"/>
</dbReference>
<dbReference type="GO" id="GO:0005509">
    <property type="term" value="F:calcium ion binding"/>
    <property type="evidence" value="ECO:0000255"/>
    <property type="project" value="GeneDB"/>
</dbReference>
<dbReference type="GO" id="GO:0006816">
    <property type="term" value="P:calcium ion transport"/>
    <property type="evidence" value="ECO:0000304"/>
    <property type="project" value="GeneDB"/>
</dbReference>
<dbReference type="CDD" id="cd00051">
    <property type="entry name" value="EFh"/>
    <property type="match status" value="1"/>
</dbReference>
<dbReference type="FunFam" id="1.10.238.10:FF:000433">
    <property type="entry name" value="Flagellar calcium-binding protein TB-24"/>
    <property type="match status" value="1"/>
</dbReference>
<dbReference type="Gene3D" id="1.10.238.10">
    <property type="entry name" value="EF-hand"/>
    <property type="match status" value="1"/>
</dbReference>
<dbReference type="InterPro" id="IPR003299">
    <property type="entry name" value="Calflagin-bd"/>
</dbReference>
<dbReference type="InterPro" id="IPR011992">
    <property type="entry name" value="EF-hand-dom_pair"/>
</dbReference>
<dbReference type="InterPro" id="IPR018247">
    <property type="entry name" value="EF_Hand_1_Ca_BS"/>
</dbReference>
<dbReference type="InterPro" id="IPR002048">
    <property type="entry name" value="EF_hand_dom"/>
</dbReference>
<dbReference type="InterPro" id="IPR054322">
    <property type="entry name" value="FCABP_EF-hand"/>
</dbReference>
<dbReference type="Pfam" id="PF13499">
    <property type="entry name" value="EF-hand_7"/>
    <property type="match status" value="1"/>
</dbReference>
<dbReference type="Pfam" id="PF22592">
    <property type="entry name" value="FCaBP_EF-hand"/>
    <property type="match status" value="1"/>
</dbReference>
<dbReference type="PRINTS" id="PR01362">
    <property type="entry name" value="CALFLAGIN"/>
</dbReference>
<dbReference type="SMART" id="SM00054">
    <property type="entry name" value="EFh"/>
    <property type="match status" value="3"/>
</dbReference>
<dbReference type="SUPFAM" id="SSF47473">
    <property type="entry name" value="EF-hand"/>
    <property type="match status" value="1"/>
</dbReference>
<dbReference type="PROSITE" id="PS00018">
    <property type="entry name" value="EF_HAND_1"/>
    <property type="match status" value="2"/>
</dbReference>
<dbReference type="PROSITE" id="PS50222">
    <property type="entry name" value="EF_HAND_2"/>
    <property type="match status" value="3"/>
</dbReference>
<feature type="chain" id="PRO_0000073736" description="Flagellar calcium-binding protein TB-1.7G">
    <location>
        <begin position="1" status="less than"/>
        <end position="229"/>
    </location>
</feature>
<feature type="domain" description="EF-hand 1" evidence="1">
    <location>
        <begin position="44"/>
        <end position="79"/>
    </location>
</feature>
<feature type="domain" description="EF-hand 2" evidence="3">
    <location>
        <begin position="80"/>
        <end position="115"/>
    </location>
</feature>
<feature type="domain" description="EF-hand 3" evidence="1">
    <location>
        <begin position="126"/>
        <end position="161"/>
    </location>
</feature>
<feature type="domain" description="EF-hand 4" evidence="1">
    <location>
        <begin position="163"/>
        <end position="198"/>
    </location>
</feature>
<feature type="region of interest" description="Disordered" evidence="2">
    <location>
        <begin position="1"/>
        <end position="25"/>
    </location>
</feature>
<feature type="region of interest" description="Disordered" evidence="2">
    <location>
        <begin position="202"/>
        <end position="229"/>
    </location>
</feature>
<feature type="compositionally biased region" description="Basic and acidic residues" evidence="2">
    <location>
        <begin position="16"/>
        <end position="25"/>
    </location>
</feature>
<feature type="compositionally biased region" description="Low complexity" evidence="2">
    <location>
        <begin position="210"/>
        <end position="221"/>
    </location>
</feature>
<feature type="binding site" evidence="1">
    <location>
        <position position="57"/>
    </location>
    <ligand>
        <name>Ca(2+)</name>
        <dbReference type="ChEBI" id="CHEBI:29108"/>
        <label>1</label>
    </ligand>
</feature>
<feature type="binding site" evidence="1">
    <location>
        <position position="59"/>
    </location>
    <ligand>
        <name>Ca(2+)</name>
        <dbReference type="ChEBI" id="CHEBI:29108"/>
        <label>1</label>
    </ligand>
</feature>
<feature type="binding site" evidence="1">
    <location>
        <position position="61"/>
    </location>
    <ligand>
        <name>Ca(2+)</name>
        <dbReference type="ChEBI" id="CHEBI:29108"/>
        <label>1</label>
    </ligand>
</feature>
<feature type="binding site" evidence="1">
    <location>
        <position position="63"/>
    </location>
    <ligand>
        <name>Ca(2+)</name>
        <dbReference type="ChEBI" id="CHEBI:29108"/>
        <label>1</label>
    </ligand>
</feature>
<feature type="binding site" evidence="1">
    <location>
        <position position="68"/>
    </location>
    <ligand>
        <name>Ca(2+)</name>
        <dbReference type="ChEBI" id="CHEBI:29108"/>
        <label>1</label>
    </ligand>
</feature>
<feature type="binding site" evidence="3">
    <location>
        <position position="139"/>
    </location>
    <ligand>
        <name>Ca(2+)</name>
        <dbReference type="ChEBI" id="CHEBI:29108"/>
        <label>2</label>
    </ligand>
</feature>
<feature type="binding site" evidence="3">
    <location>
        <position position="141"/>
    </location>
    <ligand>
        <name>Ca(2+)</name>
        <dbReference type="ChEBI" id="CHEBI:29108"/>
        <label>2</label>
    </ligand>
</feature>
<feature type="binding site" evidence="3">
    <location>
        <position position="143"/>
    </location>
    <ligand>
        <name>Ca(2+)</name>
        <dbReference type="ChEBI" id="CHEBI:29108"/>
        <label>2</label>
    </ligand>
</feature>
<feature type="binding site" evidence="3">
    <location>
        <position position="150"/>
    </location>
    <ligand>
        <name>Ca(2+)</name>
        <dbReference type="ChEBI" id="CHEBI:29108"/>
        <label>2</label>
    </ligand>
</feature>
<feature type="binding site" evidence="1">
    <location>
        <position position="176"/>
    </location>
    <ligand>
        <name>Ca(2+)</name>
        <dbReference type="ChEBI" id="CHEBI:29108"/>
        <label>3</label>
    </ligand>
</feature>
<feature type="binding site" evidence="1">
    <location>
        <position position="178"/>
    </location>
    <ligand>
        <name>Ca(2+)</name>
        <dbReference type="ChEBI" id="CHEBI:29108"/>
        <label>3</label>
    </ligand>
</feature>
<feature type="binding site" evidence="1">
    <location>
        <position position="180"/>
    </location>
    <ligand>
        <name>Ca(2+)</name>
        <dbReference type="ChEBI" id="CHEBI:29108"/>
        <label>3</label>
    </ligand>
</feature>
<feature type="binding site" evidence="1">
    <location>
        <position position="187"/>
    </location>
    <ligand>
        <name>Ca(2+)</name>
        <dbReference type="ChEBI" id="CHEBI:29108"/>
        <label>3</label>
    </ligand>
</feature>
<feature type="non-terminal residue">
    <location>
        <position position="1"/>
    </location>
</feature>
<proteinExistence type="inferred from homology"/>